<protein>
    <recommendedName>
        <fullName evidence="1">SsrA-binding protein</fullName>
    </recommendedName>
    <alternativeName>
        <fullName evidence="1">Small protein B</fullName>
    </alternativeName>
</protein>
<reference key="1">
    <citation type="journal article" date="2009" name="Nat. Genet.">
        <title>Comparative genomic and phylogeographic analysis of Mycobacterium leprae.</title>
        <authorList>
            <person name="Monot M."/>
            <person name="Honore N."/>
            <person name="Garnier T."/>
            <person name="Zidane N."/>
            <person name="Sherafi D."/>
            <person name="Paniz-Mondolfi A."/>
            <person name="Matsuoka M."/>
            <person name="Taylor G.M."/>
            <person name="Donoghue H.D."/>
            <person name="Bouwman A."/>
            <person name="Mays S."/>
            <person name="Watson C."/>
            <person name="Lockwood D."/>
            <person name="Khamispour A."/>
            <person name="Dowlati Y."/>
            <person name="Jianping S."/>
            <person name="Rea T.H."/>
            <person name="Vera-Cabrera L."/>
            <person name="Stefani M.M."/>
            <person name="Banu S."/>
            <person name="Macdonald M."/>
            <person name="Sapkota B.R."/>
            <person name="Spencer J.S."/>
            <person name="Thomas J."/>
            <person name="Harshman K."/>
            <person name="Singh P."/>
            <person name="Busso P."/>
            <person name="Gattiker A."/>
            <person name="Rougemont J."/>
            <person name="Brennan P.J."/>
            <person name="Cole S.T."/>
        </authorList>
    </citation>
    <scope>NUCLEOTIDE SEQUENCE [LARGE SCALE GENOMIC DNA]</scope>
    <source>
        <strain>Br4923</strain>
    </source>
</reference>
<proteinExistence type="inferred from homology"/>
<feature type="chain" id="PRO_1000197617" description="SsrA-binding protein">
    <location>
        <begin position="1"/>
        <end position="160"/>
    </location>
</feature>
<accession>B8ZUV3</accession>
<evidence type="ECO:0000255" key="1">
    <source>
        <dbReference type="HAMAP-Rule" id="MF_00023"/>
    </source>
</evidence>
<comment type="function">
    <text evidence="1">Required for rescue of stalled ribosomes mediated by trans-translation. Binds to transfer-messenger RNA (tmRNA), required for stable association of tmRNA with ribosomes. tmRNA and SmpB together mimic tRNA shape, replacing the anticodon stem-loop with SmpB. tmRNA is encoded by the ssrA gene; the 2 termini fold to resemble tRNA(Ala) and it encodes a 'tag peptide', a short internal open reading frame. During trans-translation Ala-aminoacylated tmRNA acts like a tRNA, entering the A-site of stalled ribosomes, displacing the stalled mRNA. The ribosome then switches to translate the ORF on the tmRNA; the nascent peptide is terminated with the 'tag peptide' encoded by the tmRNA and targeted for degradation. The ribosome is freed to recommence translation, which seems to be the essential function of trans-translation.</text>
</comment>
<comment type="subcellular location">
    <subcellularLocation>
        <location evidence="1">Cytoplasm</location>
    </subcellularLocation>
    <text evidence="1">The tmRNA-SmpB complex associates with stalled 70S ribosomes.</text>
</comment>
<comment type="similarity">
    <text evidence="1">Belongs to the SmpB family.</text>
</comment>
<sequence>MARNPRGGKQIVATNRKARHDYAIIELFEAGVALLGTEVKSLREGHASLADAFATVDSGEVWLRNMHIPEYQHGSWTNHDPRRNRKLLLHRRQIDTLVGKIRDGNLALVPLSLYFAEGKVKVELALARGKKLHDKRQDMARRDAQREVIRELGRRAKGML</sequence>
<organism>
    <name type="scientific">Mycobacterium leprae (strain Br4923)</name>
    <dbReference type="NCBI Taxonomy" id="561304"/>
    <lineage>
        <taxon>Bacteria</taxon>
        <taxon>Bacillati</taxon>
        <taxon>Actinomycetota</taxon>
        <taxon>Actinomycetes</taxon>
        <taxon>Mycobacteriales</taxon>
        <taxon>Mycobacteriaceae</taxon>
        <taxon>Mycobacterium</taxon>
    </lineage>
</organism>
<dbReference type="EMBL" id="FM211192">
    <property type="protein sequence ID" value="CAR70765.1"/>
    <property type="molecule type" value="Genomic_DNA"/>
</dbReference>
<dbReference type="SMR" id="B8ZUV3"/>
<dbReference type="KEGG" id="mlb:MLBr00671"/>
<dbReference type="HOGENOM" id="CLU_108953_0_0_11"/>
<dbReference type="Proteomes" id="UP000006900">
    <property type="component" value="Chromosome"/>
</dbReference>
<dbReference type="GO" id="GO:0005829">
    <property type="term" value="C:cytosol"/>
    <property type="evidence" value="ECO:0007669"/>
    <property type="project" value="TreeGrafter"/>
</dbReference>
<dbReference type="GO" id="GO:0003723">
    <property type="term" value="F:RNA binding"/>
    <property type="evidence" value="ECO:0007669"/>
    <property type="project" value="UniProtKB-UniRule"/>
</dbReference>
<dbReference type="GO" id="GO:0070929">
    <property type="term" value="P:trans-translation"/>
    <property type="evidence" value="ECO:0007669"/>
    <property type="project" value="UniProtKB-UniRule"/>
</dbReference>
<dbReference type="CDD" id="cd09294">
    <property type="entry name" value="SmpB"/>
    <property type="match status" value="1"/>
</dbReference>
<dbReference type="Gene3D" id="2.40.280.10">
    <property type="match status" value="1"/>
</dbReference>
<dbReference type="HAMAP" id="MF_00023">
    <property type="entry name" value="SmpB"/>
    <property type="match status" value="1"/>
</dbReference>
<dbReference type="InterPro" id="IPR023620">
    <property type="entry name" value="SmpB"/>
</dbReference>
<dbReference type="InterPro" id="IPR000037">
    <property type="entry name" value="SsrA-bd_prot"/>
</dbReference>
<dbReference type="InterPro" id="IPR020081">
    <property type="entry name" value="SsrA-bd_prot_CS"/>
</dbReference>
<dbReference type="NCBIfam" id="NF003843">
    <property type="entry name" value="PRK05422.1"/>
    <property type="match status" value="1"/>
</dbReference>
<dbReference type="NCBIfam" id="TIGR00086">
    <property type="entry name" value="smpB"/>
    <property type="match status" value="1"/>
</dbReference>
<dbReference type="PANTHER" id="PTHR30308:SF2">
    <property type="entry name" value="SSRA-BINDING PROTEIN"/>
    <property type="match status" value="1"/>
</dbReference>
<dbReference type="PANTHER" id="PTHR30308">
    <property type="entry name" value="TMRNA-BINDING COMPONENT OF TRANS-TRANSLATION TAGGING COMPLEX"/>
    <property type="match status" value="1"/>
</dbReference>
<dbReference type="Pfam" id="PF01668">
    <property type="entry name" value="SmpB"/>
    <property type="match status" value="1"/>
</dbReference>
<dbReference type="SUPFAM" id="SSF74982">
    <property type="entry name" value="Small protein B (SmpB)"/>
    <property type="match status" value="1"/>
</dbReference>
<dbReference type="PROSITE" id="PS01317">
    <property type="entry name" value="SSRP"/>
    <property type="match status" value="1"/>
</dbReference>
<keyword id="KW-0963">Cytoplasm</keyword>
<keyword id="KW-0694">RNA-binding</keyword>
<gene>
    <name evidence="1" type="primary">smpB</name>
    <name type="ordered locus">MLBr00671</name>
</gene>
<name>SSRP_MYCLB</name>